<accession>Q6D0G6</accession>
<comment type="function">
    <text evidence="1">Catalyzes the isomerization between 2-isopropylmalate and 3-isopropylmalate, via the formation of 2-isopropylmaleate.</text>
</comment>
<comment type="catalytic activity">
    <reaction evidence="1">
        <text>(2R,3S)-3-isopropylmalate = (2S)-2-isopropylmalate</text>
        <dbReference type="Rhea" id="RHEA:32287"/>
        <dbReference type="ChEBI" id="CHEBI:1178"/>
        <dbReference type="ChEBI" id="CHEBI:35121"/>
        <dbReference type="EC" id="4.2.1.33"/>
    </reaction>
</comment>
<comment type="cofactor">
    <cofactor evidence="1">
        <name>[4Fe-4S] cluster</name>
        <dbReference type="ChEBI" id="CHEBI:49883"/>
    </cofactor>
    <text evidence="1">Binds 1 [4Fe-4S] cluster per subunit.</text>
</comment>
<comment type="pathway">
    <text evidence="1">Amino-acid biosynthesis; L-leucine biosynthesis; L-leucine from 3-methyl-2-oxobutanoate: step 2/4.</text>
</comment>
<comment type="subunit">
    <text evidence="1">Heterodimer of LeuC and LeuD.</text>
</comment>
<comment type="similarity">
    <text evidence="1">Belongs to the aconitase/IPM isomerase family. LeuC type 1 subfamily.</text>
</comment>
<feature type="chain" id="PRO_0000076744" description="3-isopropylmalate dehydratase large subunit">
    <location>
        <begin position="1"/>
        <end position="466"/>
    </location>
</feature>
<feature type="binding site" evidence="1">
    <location>
        <position position="347"/>
    </location>
    <ligand>
        <name>[4Fe-4S] cluster</name>
        <dbReference type="ChEBI" id="CHEBI:49883"/>
    </ligand>
</feature>
<feature type="binding site" evidence="1">
    <location>
        <position position="407"/>
    </location>
    <ligand>
        <name>[4Fe-4S] cluster</name>
        <dbReference type="ChEBI" id="CHEBI:49883"/>
    </ligand>
</feature>
<feature type="binding site" evidence="1">
    <location>
        <position position="410"/>
    </location>
    <ligand>
        <name>[4Fe-4S] cluster</name>
        <dbReference type="ChEBI" id="CHEBI:49883"/>
    </ligand>
</feature>
<gene>
    <name evidence="1" type="primary">leuC</name>
    <name type="ordered locus">ECA3833</name>
</gene>
<dbReference type="EC" id="4.2.1.33" evidence="1"/>
<dbReference type="EMBL" id="BX950851">
    <property type="protein sequence ID" value="CAG76731.1"/>
    <property type="molecule type" value="Genomic_DNA"/>
</dbReference>
<dbReference type="RefSeq" id="WP_011095331.1">
    <property type="nucleotide sequence ID" value="NC_004547.2"/>
</dbReference>
<dbReference type="SMR" id="Q6D0G6"/>
<dbReference type="STRING" id="218491.ECA3833"/>
<dbReference type="KEGG" id="eca:ECA3833"/>
<dbReference type="PATRIC" id="fig|218491.5.peg.3888"/>
<dbReference type="eggNOG" id="COG0065">
    <property type="taxonomic scope" value="Bacteria"/>
</dbReference>
<dbReference type="HOGENOM" id="CLU_006714_3_4_6"/>
<dbReference type="OrthoDB" id="9802769at2"/>
<dbReference type="UniPathway" id="UPA00048">
    <property type="reaction ID" value="UER00071"/>
</dbReference>
<dbReference type="Proteomes" id="UP000007966">
    <property type="component" value="Chromosome"/>
</dbReference>
<dbReference type="GO" id="GO:0003861">
    <property type="term" value="F:3-isopropylmalate dehydratase activity"/>
    <property type="evidence" value="ECO:0007669"/>
    <property type="project" value="UniProtKB-UniRule"/>
</dbReference>
<dbReference type="GO" id="GO:0051539">
    <property type="term" value="F:4 iron, 4 sulfur cluster binding"/>
    <property type="evidence" value="ECO:0007669"/>
    <property type="project" value="UniProtKB-KW"/>
</dbReference>
<dbReference type="GO" id="GO:0046872">
    <property type="term" value="F:metal ion binding"/>
    <property type="evidence" value="ECO:0007669"/>
    <property type="project" value="UniProtKB-KW"/>
</dbReference>
<dbReference type="GO" id="GO:0009098">
    <property type="term" value="P:L-leucine biosynthetic process"/>
    <property type="evidence" value="ECO:0007669"/>
    <property type="project" value="UniProtKB-UniRule"/>
</dbReference>
<dbReference type="CDD" id="cd01583">
    <property type="entry name" value="IPMI"/>
    <property type="match status" value="1"/>
</dbReference>
<dbReference type="FunFam" id="3.30.499.10:FF:000006">
    <property type="entry name" value="3-isopropylmalate dehydratase large subunit"/>
    <property type="match status" value="1"/>
</dbReference>
<dbReference type="FunFam" id="3.30.499.10:FF:000007">
    <property type="entry name" value="3-isopropylmalate dehydratase large subunit"/>
    <property type="match status" value="1"/>
</dbReference>
<dbReference type="Gene3D" id="3.30.499.10">
    <property type="entry name" value="Aconitase, domain 3"/>
    <property type="match status" value="2"/>
</dbReference>
<dbReference type="HAMAP" id="MF_01026">
    <property type="entry name" value="LeuC_type1"/>
    <property type="match status" value="1"/>
</dbReference>
<dbReference type="InterPro" id="IPR004430">
    <property type="entry name" value="3-IsopropMal_deHydase_lsu"/>
</dbReference>
<dbReference type="InterPro" id="IPR015931">
    <property type="entry name" value="Acnase/IPM_dHydase_lsu_aba_1/3"/>
</dbReference>
<dbReference type="InterPro" id="IPR001030">
    <property type="entry name" value="Acoase/IPM_deHydtase_lsu_aba"/>
</dbReference>
<dbReference type="InterPro" id="IPR018136">
    <property type="entry name" value="Aconitase_4Fe-4S_BS"/>
</dbReference>
<dbReference type="InterPro" id="IPR036008">
    <property type="entry name" value="Aconitase_4Fe-4S_dom"/>
</dbReference>
<dbReference type="InterPro" id="IPR050067">
    <property type="entry name" value="IPM_dehydratase_rel_enz"/>
</dbReference>
<dbReference type="InterPro" id="IPR033941">
    <property type="entry name" value="IPMI_cat"/>
</dbReference>
<dbReference type="NCBIfam" id="TIGR00170">
    <property type="entry name" value="leuC"/>
    <property type="match status" value="1"/>
</dbReference>
<dbReference type="NCBIfam" id="NF004016">
    <property type="entry name" value="PRK05478.1"/>
    <property type="match status" value="1"/>
</dbReference>
<dbReference type="NCBIfam" id="NF009116">
    <property type="entry name" value="PRK12466.1"/>
    <property type="match status" value="1"/>
</dbReference>
<dbReference type="PANTHER" id="PTHR43822:SF9">
    <property type="entry name" value="3-ISOPROPYLMALATE DEHYDRATASE"/>
    <property type="match status" value="1"/>
</dbReference>
<dbReference type="PANTHER" id="PTHR43822">
    <property type="entry name" value="HOMOACONITASE, MITOCHONDRIAL-RELATED"/>
    <property type="match status" value="1"/>
</dbReference>
<dbReference type="Pfam" id="PF00330">
    <property type="entry name" value="Aconitase"/>
    <property type="match status" value="1"/>
</dbReference>
<dbReference type="PRINTS" id="PR00415">
    <property type="entry name" value="ACONITASE"/>
</dbReference>
<dbReference type="SUPFAM" id="SSF53732">
    <property type="entry name" value="Aconitase iron-sulfur domain"/>
    <property type="match status" value="1"/>
</dbReference>
<dbReference type="PROSITE" id="PS00450">
    <property type="entry name" value="ACONITASE_1"/>
    <property type="match status" value="1"/>
</dbReference>
<dbReference type="PROSITE" id="PS01244">
    <property type="entry name" value="ACONITASE_2"/>
    <property type="match status" value="1"/>
</dbReference>
<keyword id="KW-0004">4Fe-4S</keyword>
<keyword id="KW-0028">Amino-acid biosynthesis</keyword>
<keyword id="KW-0100">Branched-chain amino acid biosynthesis</keyword>
<keyword id="KW-0408">Iron</keyword>
<keyword id="KW-0411">Iron-sulfur</keyword>
<keyword id="KW-0432">Leucine biosynthesis</keyword>
<keyword id="KW-0456">Lyase</keyword>
<keyword id="KW-0479">Metal-binding</keyword>
<keyword id="KW-1185">Reference proteome</keyword>
<reference key="1">
    <citation type="journal article" date="2004" name="Proc. Natl. Acad. Sci. U.S.A.">
        <title>Genome sequence of the enterobacterial phytopathogen Erwinia carotovora subsp. atroseptica and characterization of virulence factors.</title>
        <authorList>
            <person name="Bell K.S."/>
            <person name="Sebaihia M."/>
            <person name="Pritchard L."/>
            <person name="Holden M.T.G."/>
            <person name="Hyman L.J."/>
            <person name="Holeva M.C."/>
            <person name="Thomson N.R."/>
            <person name="Bentley S.D."/>
            <person name="Churcher L.J.C."/>
            <person name="Mungall K."/>
            <person name="Atkin R."/>
            <person name="Bason N."/>
            <person name="Brooks K."/>
            <person name="Chillingworth T."/>
            <person name="Clark K."/>
            <person name="Doggett J."/>
            <person name="Fraser A."/>
            <person name="Hance Z."/>
            <person name="Hauser H."/>
            <person name="Jagels K."/>
            <person name="Moule S."/>
            <person name="Norbertczak H."/>
            <person name="Ormond D."/>
            <person name="Price C."/>
            <person name="Quail M.A."/>
            <person name="Sanders M."/>
            <person name="Walker D."/>
            <person name="Whitehead S."/>
            <person name="Salmond G.P.C."/>
            <person name="Birch P.R.J."/>
            <person name="Parkhill J."/>
            <person name="Toth I.K."/>
        </authorList>
    </citation>
    <scope>NUCLEOTIDE SEQUENCE [LARGE SCALE GENOMIC DNA]</scope>
    <source>
        <strain>SCRI 1043 / ATCC BAA-672</strain>
    </source>
</reference>
<name>LEUC_PECAS</name>
<protein>
    <recommendedName>
        <fullName evidence="1">3-isopropylmalate dehydratase large subunit</fullName>
        <ecNumber evidence="1">4.2.1.33</ecNumber>
    </recommendedName>
    <alternativeName>
        <fullName evidence="1">Alpha-IPM isomerase</fullName>
        <shortName evidence="1">IPMI</shortName>
    </alternativeName>
    <alternativeName>
        <fullName evidence="1">Isopropylmalate isomerase</fullName>
    </alternativeName>
</protein>
<sequence length="466" mass="49935">MGKTLYQKLFDAHIVHEAPNETPLLYIDRHLVHEVTSPQAFDGLRAMGRKVRQPGKTFATMDHNVSTQTKDINASGEMARIQMQELIKNCAEFGVQLYDLNHPYQGIVHVIGPEQGMTLPGMTIVCGDSHTATHGAFGSLAFGIGTSEVEHVLATQTLKQGRAKTMKIEVTGDAAHGITAKDIVLAIIGKTGSAGGTGHVVEFCGKAIRALSMEGRMTLCNMAIEMGAKAGLVAPDETTFNYLKGRQFAPKDANWDAAVAYWSTLKSDDDAQFDTIVTLDAAQIAPQVTWGTNPGQVIAVNQEIPNPDSFSDPVERASAAKALAYMDLQPGIKLTDVKIDKVFIGSCTNSRIEDLRAAAEIAKGRKVAAGVQAIVVPGSGPVKTMAELEGLDKVFIEAGFEWRLPGCSMCLAMNNDRLNPGERCASTSNRNFEGRQGRAGRTHLVSPAMAAAAAVTGRFADVRELN</sequence>
<proteinExistence type="inferred from homology"/>
<organism>
    <name type="scientific">Pectobacterium atrosepticum (strain SCRI 1043 / ATCC BAA-672)</name>
    <name type="common">Erwinia carotovora subsp. atroseptica</name>
    <dbReference type="NCBI Taxonomy" id="218491"/>
    <lineage>
        <taxon>Bacteria</taxon>
        <taxon>Pseudomonadati</taxon>
        <taxon>Pseudomonadota</taxon>
        <taxon>Gammaproteobacteria</taxon>
        <taxon>Enterobacterales</taxon>
        <taxon>Pectobacteriaceae</taxon>
        <taxon>Pectobacterium</taxon>
    </lineage>
</organism>
<evidence type="ECO:0000255" key="1">
    <source>
        <dbReference type="HAMAP-Rule" id="MF_01026"/>
    </source>
</evidence>